<protein>
    <recommendedName>
        <fullName evidence="7">Choline/ethanolamine transporter flvcr2a</fullName>
    </recommendedName>
    <alternativeName>
        <fullName evidence="7">Feline leukemia virus subgroup C receptor-related protein 2 homolog A</fullName>
    </alternativeName>
    <alternativeName>
        <fullName evidence="7">Heme transporter flvcr2a</fullName>
    </alternativeName>
    <alternativeName>
        <fullName evidence="7">Major facilitator superfamily domain containing 7C-a</fullName>
    </alternativeName>
</protein>
<sequence>MCDKADNHIDVQPEGNLEVSSVSSTRLYRRRWVILLLFSSYSLCNAFQWIQYGIINNIFMKFYQVSSFAVDWLSMVYMLTYIPFIFPVTWLLERKGLRVVALLAASINCAGTWIKVASVQPSLFWVTMLGQFACSCAQVFILGMPSQVASVWFGSDEVSTACAIGVFGNQLGIAIGFLVPPVLVPNVEDMGELAEHISIMFYITAAVATLIFLLVVFVFQEKPETPPSLAQVALRNMPTGQHSYLASIARLMCNKPFILLLISYGLNVGSFYAVSTLLNRMIIEHYPGEEVNAGRIGLTLVVAGVVGSLICGVWLDKTKTYKQTTLSVYLLSFVGMLIYSFTLNLGHLWLVFLTSGVLGFFMTGYLPLGFEFAVELTYPESEGTSSGLLNCSAQVFGIAFTIIQGKIIDHFGTLAGNIFLCVFLLIGSIMTAFIKSDLRRQKANQETGGNADSSVHPQHGETLPVKEVKM</sequence>
<name>FLC2A_DANRE</name>
<keyword id="KW-1003">Cell membrane</keyword>
<keyword id="KW-0256">Endoplasmic reticulum</keyword>
<keyword id="KW-0472">Membrane</keyword>
<keyword id="KW-0496">Mitochondrion</keyword>
<keyword id="KW-1185">Reference proteome</keyword>
<keyword id="KW-0812">Transmembrane</keyword>
<keyword id="KW-1133">Transmembrane helix</keyword>
<keyword id="KW-0813">Transport</keyword>
<proteinExistence type="inferred from homology"/>
<accession>A0A0R4ILB2</accession>
<accession>A0A8N7TF83</accession>
<feature type="chain" id="PRO_0000460814" description="Choline/ethanolamine transporter flvcr2a">
    <location>
        <begin position="1"/>
        <end position="470"/>
    </location>
</feature>
<feature type="topological domain" description="Cytoplasmic" evidence="1">
    <location>
        <begin position="1"/>
        <end position="23"/>
    </location>
</feature>
<feature type="transmembrane region" description="Helical; Name=TM1" evidence="1">
    <location>
        <begin position="24"/>
        <end position="48"/>
    </location>
</feature>
<feature type="topological domain" description="Extracellular" evidence="1">
    <location>
        <begin position="49"/>
        <end position="66"/>
    </location>
</feature>
<feature type="transmembrane region" description="Helical; Name=TM2" evidence="1">
    <location>
        <begin position="67"/>
        <end position="94"/>
    </location>
</feature>
<feature type="topological domain" description="Cytoplasmic" evidence="1">
    <location>
        <begin position="95"/>
        <end position="96"/>
    </location>
</feature>
<feature type="transmembrane region" description="Helical; Name=TM3" evidence="1">
    <location>
        <begin position="97"/>
        <end position="116"/>
    </location>
</feature>
<feature type="topological domain" description="Extracellular" evidence="1">
    <location>
        <begin position="117"/>
        <end position="123"/>
    </location>
</feature>
<feature type="transmembrane region" description="Helical; Name=TM4" evidence="1">
    <location>
        <begin position="124"/>
        <end position="152"/>
    </location>
</feature>
<feature type="topological domain" description="Cytoplasmic" evidence="1">
    <location>
        <begin position="153"/>
        <end position="157"/>
    </location>
</feature>
<feature type="transmembrane region" description="Helical; Name=TM5" evidence="1">
    <location>
        <begin position="158"/>
        <end position="183"/>
    </location>
</feature>
<feature type="topological domain" description="Extracellular" evidence="1">
    <location>
        <begin position="184"/>
        <end position="188"/>
    </location>
</feature>
<feature type="transmembrane region" description="Helical; Name=TM6" evidence="1">
    <location>
        <begin position="189"/>
        <end position="218"/>
    </location>
</feature>
<feature type="topological domain" description="Cytoplasmic" evidence="1">
    <location>
        <begin position="219"/>
        <end position="254"/>
    </location>
</feature>
<feature type="transmembrane region" description="Helical; Name=TM7" evidence="1">
    <location>
        <begin position="255"/>
        <end position="285"/>
    </location>
</feature>
<feature type="topological domain" description="Extracellular" evidence="1">
    <location>
        <begin position="286"/>
        <end position="289"/>
    </location>
</feature>
<feature type="transmembrane region" description="Helical; Name=TM8" evidence="1">
    <location>
        <begin position="290"/>
        <end position="318"/>
    </location>
</feature>
<feature type="topological domain" description="Cytoplasmic" evidence="1">
    <location>
        <begin position="319"/>
        <end position="320"/>
    </location>
</feature>
<feature type="transmembrane region" description="Helical; Name=TM9" evidence="1">
    <location>
        <begin position="321"/>
        <end position="343"/>
    </location>
</feature>
<feature type="topological domain" description="Extracellular" evidence="1">
    <location>
        <begin position="344"/>
        <end position="346"/>
    </location>
</feature>
<feature type="transmembrane region" description="Helical; Name=TM10" evidence="1">
    <location>
        <begin position="347"/>
        <end position="376"/>
    </location>
</feature>
<feature type="topological domain" description="Cytoplasmic" evidence="1">
    <location>
        <begin position="377"/>
        <end position="384"/>
    </location>
</feature>
<feature type="transmembrane region" description="Helical; Name=TM11" evidence="1">
    <location>
        <begin position="385"/>
        <end position="410"/>
    </location>
</feature>
<feature type="topological domain" description="Extracellular" evidence="1">
    <location>
        <begin position="411"/>
        <end position="412"/>
    </location>
</feature>
<feature type="transmembrane region" description="Helical; Name=TM12" evidence="1">
    <location>
        <begin position="413"/>
        <end position="435"/>
    </location>
</feature>
<feature type="topological domain" description="Cytoplasmic" evidence="1">
    <location>
        <begin position="436"/>
        <end position="470"/>
    </location>
</feature>
<feature type="region of interest" description="Disordered" evidence="4">
    <location>
        <begin position="445"/>
        <end position="470"/>
    </location>
</feature>
<feature type="compositionally biased region" description="Polar residues" evidence="4">
    <location>
        <begin position="445"/>
        <end position="456"/>
    </location>
</feature>
<feature type="binding site" evidence="1">
    <location>
        <position position="45"/>
    </location>
    <ligand>
        <name>choline</name>
        <dbReference type="ChEBI" id="CHEBI:15354"/>
    </ligand>
</feature>
<feature type="binding site" evidence="1">
    <location>
        <position position="46"/>
    </location>
    <ligand>
        <name>choline</name>
        <dbReference type="ChEBI" id="CHEBI:15354"/>
    </ligand>
</feature>
<feature type="binding site" evidence="1">
    <location>
        <position position="49"/>
    </location>
    <ligand>
        <name>choline</name>
        <dbReference type="ChEBI" id="CHEBI:15354"/>
    </ligand>
</feature>
<feature type="binding site" evidence="2">
    <location>
        <position position="138"/>
    </location>
    <ligand>
        <name>choline</name>
        <dbReference type="ChEBI" id="CHEBI:15354"/>
    </ligand>
</feature>
<feature type="binding site" evidence="1">
    <location>
        <position position="142"/>
    </location>
    <ligand>
        <name>choline</name>
        <dbReference type="ChEBI" id="CHEBI:15354"/>
    </ligand>
</feature>
<feature type="binding site" evidence="1">
    <location>
        <position position="272"/>
    </location>
    <ligand>
        <name>choline</name>
        <dbReference type="ChEBI" id="CHEBI:15354"/>
    </ligand>
</feature>
<feature type="binding site" evidence="1">
    <location>
        <position position="394"/>
    </location>
    <ligand>
        <name>choline</name>
        <dbReference type="ChEBI" id="CHEBI:15354"/>
    </ligand>
</feature>
<dbReference type="EMBL" id="CABZ01056536">
    <property type="status" value="NOT_ANNOTATED_CDS"/>
    <property type="molecule type" value="Genomic_DNA"/>
</dbReference>
<dbReference type="EMBL" id="CU633997">
    <property type="status" value="NOT_ANNOTATED_CDS"/>
    <property type="molecule type" value="Genomic_DNA"/>
</dbReference>
<dbReference type="RefSeq" id="XP_693589.3">
    <property type="nucleotide sequence ID" value="XM_688497.8"/>
</dbReference>
<dbReference type="SMR" id="A0A0R4ILB2"/>
<dbReference type="FunCoup" id="A0A0R4ILB2">
    <property type="interactions" value="332"/>
</dbReference>
<dbReference type="STRING" id="7955.ENSDARP00000136810"/>
<dbReference type="GeneID" id="565210"/>
<dbReference type="KEGG" id="dre:565210"/>
<dbReference type="AGR" id="ZFIN:ZDB-GENE-111020-14"/>
<dbReference type="CTD" id="565210"/>
<dbReference type="ZFIN" id="ZDB-GENE-111020-14">
    <property type="gene designation" value="flvcr2a"/>
</dbReference>
<dbReference type="OMA" id="GLCQNFM"/>
<dbReference type="OrthoDB" id="422206at2759"/>
<dbReference type="Proteomes" id="UP000000437">
    <property type="component" value="Chromosome 17"/>
</dbReference>
<dbReference type="Bgee" id="ENSDARG00000038957">
    <property type="expression patterns" value="Expressed in liver and 2 other cell types or tissues"/>
</dbReference>
<dbReference type="ExpressionAtlas" id="A0A0R4ILB2">
    <property type="expression patterns" value="baseline"/>
</dbReference>
<dbReference type="GO" id="GO:0005789">
    <property type="term" value="C:endoplasmic reticulum membrane"/>
    <property type="evidence" value="ECO:0007669"/>
    <property type="project" value="UniProtKB-SubCell"/>
</dbReference>
<dbReference type="GO" id="GO:0016020">
    <property type="term" value="C:membrane"/>
    <property type="evidence" value="ECO:0000318"/>
    <property type="project" value="GO_Central"/>
</dbReference>
<dbReference type="GO" id="GO:0031966">
    <property type="term" value="C:mitochondrial membrane"/>
    <property type="evidence" value="ECO:0007669"/>
    <property type="project" value="UniProtKB-SubCell"/>
</dbReference>
<dbReference type="GO" id="GO:0005886">
    <property type="term" value="C:plasma membrane"/>
    <property type="evidence" value="ECO:0000250"/>
    <property type="project" value="UniProtKB"/>
</dbReference>
<dbReference type="GO" id="GO:0015220">
    <property type="term" value="F:choline transmembrane transporter activity"/>
    <property type="evidence" value="ECO:0000314"/>
    <property type="project" value="UniProtKB"/>
</dbReference>
<dbReference type="GO" id="GO:0034228">
    <property type="term" value="F:ethanolamine transmembrane transporter activity"/>
    <property type="evidence" value="ECO:0000250"/>
    <property type="project" value="UniProtKB"/>
</dbReference>
<dbReference type="GO" id="GO:0020037">
    <property type="term" value="F:heme binding"/>
    <property type="evidence" value="ECO:0000318"/>
    <property type="project" value="GO_Central"/>
</dbReference>
<dbReference type="GO" id="GO:0015232">
    <property type="term" value="F:heme transmembrane transporter activity"/>
    <property type="evidence" value="ECO:0000318"/>
    <property type="project" value="GO_Central"/>
</dbReference>
<dbReference type="GO" id="GO:0097037">
    <property type="term" value="P:heme export"/>
    <property type="evidence" value="ECO:0000318"/>
    <property type="project" value="GO_Central"/>
</dbReference>
<dbReference type="GO" id="GO:0150104">
    <property type="term" value="P:transport across blood-brain barrier"/>
    <property type="evidence" value="ECO:0000250"/>
    <property type="project" value="UniProtKB"/>
</dbReference>
<dbReference type="FunFam" id="1.20.1250.20:FF:000101">
    <property type="entry name" value="feline leukemia virus subgroup C receptor-related protein 2"/>
    <property type="match status" value="1"/>
</dbReference>
<dbReference type="FunFam" id="1.20.1250.20:FF:000092">
    <property type="entry name" value="Feline leukemia virus subgroup C receptor-related protein 2 isoform 1"/>
    <property type="match status" value="1"/>
</dbReference>
<dbReference type="Gene3D" id="1.20.1250.20">
    <property type="entry name" value="MFS general substrate transporter like domains"/>
    <property type="match status" value="2"/>
</dbReference>
<dbReference type="InterPro" id="IPR049680">
    <property type="entry name" value="FLVCR1-2_SLC49-like"/>
</dbReference>
<dbReference type="InterPro" id="IPR011701">
    <property type="entry name" value="MFS"/>
</dbReference>
<dbReference type="InterPro" id="IPR020846">
    <property type="entry name" value="MFS_dom"/>
</dbReference>
<dbReference type="InterPro" id="IPR036259">
    <property type="entry name" value="MFS_trans_sf"/>
</dbReference>
<dbReference type="PANTHER" id="PTHR10924:SF3">
    <property type="entry name" value="HEME TRANSPORTER FLVCR2"/>
    <property type="match status" value="1"/>
</dbReference>
<dbReference type="PANTHER" id="PTHR10924">
    <property type="entry name" value="MAJOR FACILITATOR SUPERFAMILY PROTEIN-RELATED"/>
    <property type="match status" value="1"/>
</dbReference>
<dbReference type="Pfam" id="PF07690">
    <property type="entry name" value="MFS_1"/>
    <property type="match status" value="1"/>
</dbReference>
<dbReference type="SUPFAM" id="SSF103473">
    <property type="entry name" value="MFS general substrate transporter"/>
    <property type="match status" value="1"/>
</dbReference>
<dbReference type="PROSITE" id="PS50850">
    <property type="entry name" value="MFS"/>
    <property type="match status" value="1"/>
</dbReference>
<comment type="function">
    <text evidence="1 2 5">Choline uniporter that specifically mediates choline uptake at the blood-brain-barrier (PubMed:38302740). Responsible for the majority of choline uptake across the blood-brain-barrier from the circulation into the brain (By similarity). Choline, a nutrient critical for brain development, is a precursor of phosphatidylcholine, as well as betaine (By similarity). Also mediates transport of ethanolamine (By similarity). Choline and ethanolamine transport is not coupled with proton transport and is exclusively driven by the choline gradient across the plasma membrane (By similarity). Also acts as a heme b transporter (By similarity).</text>
</comment>
<comment type="catalytic activity">
    <reaction evidence="5">
        <text>choline(out) = choline(in)</text>
        <dbReference type="Rhea" id="RHEA:32751"/>
        <dbReference type="ChEBI" id="CHEBI:15354"/>
    </reaction>
</comment>
<comment type="catalytic activity">
    <reaction evidence="2">
        <text>ethanolamine(in) = ethanolamine(out)</text>
        <dbReference type="Rhea" id="RHEA:32747"/>
        <dbReference type="ChEBI" id="CHEBI:57603"/>
    </reaction>
</comment>
<comment type="catalytic activity">
    <reaction evidence="2">
        <text>heme b(in) = heme b(out)</text>
        <dbReference type="Rhea" id="RHEA:75443"/>
        <dbReference type="ChEBI" id="CHEBI:60344"/>
    </reaction>
</comment>
<comment type="subcellular location">
    <subcellularLocation>
        <location evidence="1">Cell membrane</location>
        <topology evidence="1">Multi-pass membrane protein</topology>
    </subcellularLocation>
    <subcellularLocation>
        <location evidence="1">Mitochondrion membrane</location>
        <topology evidence="3">Multi-pass membrane protein</topology>
    </subcellularLocation>
    <subcellularLocation>
        <location evidence="2">Endoplasmic reticulum membrane</location>
        <topology evidence="3">Multi-pass membrane protein</topology>
    </subcellularLocation>
</comment>
<comment type="similarity">
    <text evidence="7">Belongs to the major facilitator superfamily. Feline leukemia virus subgroup C receptor (TC 2.A.1.28.1) family.</text>
</comment>
<reference key="1">
    <citation type="journal article" date="2013" name="Nature">
        <title>The zebrafish reference genome sequence and its relationship to the human genome.</title>
        <authorList>
            <person name="Howe K."/>
            <person name="Clark M.D."/>
            <person name="Torroja C.F."/>
            <person name="Torrance J."/>
            <person name="Berthelot C."/>
            <person name="Muffato M."/>
            <person name="Collins J.E."/>
            <person name="Humphray S."/>
            <person name="McLaren K."/>
            <person name="Matthews L."/>
            <person name="McLaren S."/>
            <person name="Sealy I."/>
            <person name="Caccamo M."/>
            <person name="Churcher C."/>
            <person name="Scott C."/>
            <person name="Barrett J.C."/>
            <person name="Koch R."/>
            <person name="Rauch G.J."/>
            <person name="White S."/>
            <person name="Chow W."/>
            <person name="Kilian B."/>
            <person name="Quintais L.T."/>
            <person name="Guerra-Assuncao J.A."/>
            <person name="Zhou Y."/>
            <person name="Gu Y."/>
            <person name="Yen J."/>
            <person name="Vogel J.H."/>
            <person name="Eyre T."/>
            <person name="Redmond S."/>
            <person name="Banerjee R."/>
            <person name="Chi J."/>
            <person name="Fu B."/>
            <person name="Langley E."/>
            <person name="Maguire S.F."/>
            <person name="Laird G.K."/>
            <person name="Lloyd D."/>
            <person name="Kenyon E."/>
            <person name="Donaldson S."/>
            <person name="Sehra H."/>
            <person name="Almeida-King J."/>
            <person name="Loveland J."/>
            <person name="Trevanion S."/>
            <person name="Jones M."/>
            <person name="Quail M."/>
            <person name="Willey D."/>
            <person name="Hunt A."/>
            <person name="Burton J."/>
            <person name="Sims S."/>
            <person name="McLay K."/>
            <person name="Plumb B."/>
            <person name="Davis J."/>
            <person name="Clee C."/>
            <person name="Oliver K."/>
            <person name="Clark R."/>
            <person name="Riddle C."/>
            <person name="Elliot D."/>
            <person name="Threadgold G."/>
            <person name="Harden G."/>
            <person name="Ware D."/>
            <person name="Begum S."/>
            <person name="Mortimore B."/>
            <person name="Kerry G."/>
            <person name="Heath P."/>
            <person name="Phillimore B."/>
            <person name="Tracey A."/>
            <person name="Corby N."/>
            <person name="Dunn M."/>
            <person name="Johnson C."/>
            <person name="Wood J."/>
            <person name="Clark S."/>
            <person name="Pelan S."/>
            <person name="Griffiths G."/>
            <person name="Smith M."/>
            <person name="Glithero R."/>
            <person name="Howden P."/>
            <person name="Barker N."/>
            <person name="Lloyd C."/>
            <person name="Stevens C."/>
            <person name="Harley J."/>
            <person name="Holt K."/>
            <person name="Panagiotidis G."/>
            <person name="Lovell J."/>
            <person name="Beasley H."/>
            <person name="Henderson C."/>
            <person name="Gordon D."/>
            <person name="Auger K."/>
            <person name="Wright D."/>
            <person name="Collins J."/>
            <person name="Raisen C."/>
            <person name="Dyer L."/>
            <person name="Leung K."/>
            <person name="Robertson L."/>
            <person name="Ambridge K."/>
            <person name="Leongamornlert D."/>
            <person name="McGuire S."/>
            <person name="Gilderthorp R."/>
            <person name="Griffiths C."/>
            <person name="Manthravadi D."/>
            <person name="Nichol S."/>
            <person name="Barker G."/>
            <person name="Whitehead S."/>
            <person name="Kay M."/>
            <person name="Brown J."/>
            <person name="Murnane C."/>
            <person name="Gray E."/>
            <person name="Humphries M."/>
            <person name="Sycamore N."/>
            <person name="Barker D."/>
            <person name="Saunders D."/>
            <person name="Wallis J."/>
            <person name="Babbage A."/>
            <person name="Hammond S."/>
            <person name="Mashreghi-Mohammadi M."/>
            <person name="Barr L."/>
            <person name="Martin S."/>
            <person name="Wray P."/>
            <person name="Ellington A."/>
            <person name="Matthews N."/>
            <person name="Ellwood M."/>
            <person name="Woodmansey R."/>
            <person name="Clark G."/>
            <person name="Cooper J."/>
            <person name="Tromans A."/>
            <person name="Grafham D."/>
            <person name="Skuce C."/>
            <person name="Pandian R."/>
            <person name="Andrews R."/>
            <person name="Harrison E."/>
            <person name="Kimberley A."/>
            <person name="Garnett J."/>
            <person name="Fosker N."/>
            <person name="Hall R."/>
            <person name="Garner P."/>
            <person name="Kelly D."/>
            <person name="Bird C."/>
            <person name="Palmer S."/>
            <person name="Gehring I."/>
            <person name="Berger A."/>
            <person name="Dooley C.M."/>
            <person name="Ersan-Urun Z."/>
            <person name="Eser C."/>
            <person name="Geiger H."/>
            <person name="Geisler M."/>
            <person name="Karotki L."/>
            <person name="Kirn A."/>
            <person name="Konantz J."/>
            <person name="Konantz M."/>
            <person name="Oberlander M."/>
            <person name="Rudolph-Geiger S."/>
            <person name="Teucke M."/>
            <person name="Lanz C."/>
            <person name="Raddatz G."/>
            <person name="Osoegawa K."/>
            <person name="Zhu B."/>
            <person name="Rapp A."/>
            <person name="Widaa S."/>
            <person name="Langford C."/>
            <person name="Yang F."/>
            <person name="Schuster S.C."/>
            <person name="Carter N.P."/>
            <person name="Harrow J."/>
            <person name="Ning Z."/>
            <person name="Herrero J."/>
            <person name="Searle S.M."/>
            <person name="Enright A."/>
            <person name="Geisler R."/>
            <person name="Plasterk R.H."/>
            <person name="Lee C."/>
            <person name="Westerfield M."/>
            <person name="de Jong P.J."/>
            <person name="Zon L.I."/>
            <person name="Postlethwait J.H."/>
            <person name="Nusslein-Volhard C."/>
            <person name="Hubbard T.J."/>
            <person name="Roest Crollius H."/>
            <person name="Rogers J."/>
            <person name="Stemple D.L."/>
        </authorList>
    </citation>
    <scope>NUCLEOTIDE SEQUENCE [LARGE SCALE GENOMIC DNA]</scope>
    <source>
        <strain>Tuebingen</strain>
    </source>
</reference>
<reference key="2">
    <citation type="journal article" date="2024" name="Cell Res.">
        <title>MFSD7c functions as a transporter of choline at the blood-brain barrier.</title>
        <authorList>
            <person name="Nguyen X.T.A."/>
            <person name="Le T.N.U."/>
            <person name="Nguyen T.Q."/>
            <person name="Thi Thuy Ha H."/>
            <person name="Artati A."/>
            <person name="Leong N.C.P."/>
            <person name="Nguyen D.T."/>
            <person name="Lim P.Y."/>
            <person name="Susanto A.V."/>
            <person name="Huang Q."/>
            <person name="Fam L."/>
            <person name="Leong L.N."/>
            <person name="Bonne I."/>
            <person name="Lee A."/>
            <person name="Granadillo J.L."/>
            <person name="Gooch C."/>
            <person name="Yu D."/>
            <person name="Huang H."/>
            <person name="Soong T.W."/>
            <person name="Chang M.W."/>
            <person name="Wenk M.R."/>
            <person name="Adamski J."/>
            <person name="Cazenave-Gassiot A."/>
            <person name="Nguyen L.N."/>
        </authorList>
    </citation>
    <scope>FUNCTION</scope>
    <scope>TRANSPORTER ACTIVITY</scope>
</reference>
<gene>
    <name evidence="8" type="primary">flvcr2a</name>
    <name evidence="6" type="synonym">Mfsd7c-a</name>
</gene>
<organism>
    <name type="scientific">Danio rerio</name>
    <name type="common">Zebrafish</name>
    <name type="synonym">Brachydanio rerio</name>
    <dbReference type="NCBI Taxonomy" id="7955"/>
    <lineage>
        <taxon>Eukaryota</taxon>
        <taxon>Metazoa</taxon>
        <taxon>Chordata</taxon>
        <taxon>Craniata</taxon>
        <taxon>Vertebrata</taxon>
        <taxon>Euteleostomi</taxon>
        <taxon>Actinopterygii</taxon>
        <taxon>Neopterygii</taxon>
        <taxon>Teleostei</taxon>
        <taxon>Ostariophysi</taxon>
        <taxon>Cypriniformes</taxon>
        <taxon>Danionidae</taxon>
        <taxon>Danioninae</taxon>
        <taxon>Danio</taxon>
    </lineage>
</organism>
<evidence type="ECO:0000250" key="1">
    <source>
        <dbReference type="UniProtKB" id="Q91X85"/>
    </source>
</evidence>
<evidence type="ECO:0000250" key="2">
    <source>
        <dbReference type="UniProtKB" id="Q9UPI3"/>
    </source>
</evidence>
<evidence type="ECO:0000255" key="3"/>
<evidence type="ECO:0000256" key="4">
    <source>
        <dbReference type="SAM" id="MobiDB-lite"/>
    </source>
</evidence>
<evidence type="ECO:0000269" key="5">
    <source>
    </source>
</evidence>
<evidence type="ECO:0000303" key="6">
    <source>
    </source>
</evidence>
<evidence type="ECO:0000305" key="7"/>
<evidence type="ECO:0000312" key="8">
    <source>
        <dbReference type="ZFIN" id="ZDB-GENE-111020-14"/>
    </source>
</evidence>